<accession>B4F6U4</accession>
<protein>
    <recommendedName>
        <fullName>PR domain zinc finger protein 10</fullName>
    </recommendedName>
    <alternativeName>
        <fullName>PR domain-containing protein 10</fullName>
    </alternativeName>
</protein>
<name>PRD10_XENTR</name>
<evidence type="ECO:0000250" key="1">
    <source>
        <dbReference type="UniProtKB" id="Q3UTQ7"/>
    </source>
</evidence>
<evidence type="ECO:0000250" key="2">
    <source>
        <dbReference type="UniProtKB" id="Q9NQV6"/>
    </source>
</evidence>
<evidence type="ECO:0000255" key="3">
    <source>
        <dbReference type="PROSITE-ProRule" id="PRU00042"/>
    </source>
</evidence>
<evidence type="ECO:0000255" key="4">
    <source>
        <dbReference type="PROSITE-ProRule" id="PRU00190"/>
    </source>
</evidence>
<evidence type="ECO:0000256" key="5">
    <source>
        <dbReference type="SAM" id="MobiDB-lite"/>
    </source>
</evidence>
<keyword id="KW-0010">Activator</keyword>
<keyword id="KW-0238">DNA-binding</keyword>
<keyword id="KW-0479">Metal-binding</keyword>
<keyword id="KW-0539">Nucleus</keyword>
<keyword id="KW-1185">Reference proteome</keyword>
<keyword id="KW-0677">Repeat</keyword>
<keyword id="KW-0804">Transcription</keyword>
<keyword id="KW-0805">Transcription regulation</keyword>
<keyword id="KW-0862">Zinc</keyword>
<keyword id="KW-0863">Zinc-finger</keyword>
<organism>
    <name type="scientific">Xenopus tropicalis</name>
    <name type="common">Western clawed frog</name>
    <name type="synonym">Silurana tropicalis</name>
    <dbReference type="NCBI Taxonomy" id="8364"/>
    <lineage>
        <taxon>Eukaryota</taxon>
        <taxon>Metazoa</taxon>
        <taxon>Chordata</taxon>
        <taxon>Craniata</taxon>
        <taxon>Vertebrata</taxon>
        <taxon>Euteleostomi</taxon>
        <taxon>Amphibia</taxon>
        <taxon>Batrachia</taxon>
        <taxon>Anura</taxon>
        <taxon>Pipoidea</taxon>
        <taxon>Pipidae</taxon>
        <taxon>Xenopodinae</taxon>
        <taxon>Xenopus</taxon>
        <taxon>Silurana</taxon>
    </lineage>
</organism>
<reference key="1">
    <citation type="submission" date="2008-07" db="EMBL/GenBank/DDBJ databases">
        <authorList>
            <consortium name="NIH - Xenopus Gene Collection (XGC) project"/>
        </authorList>
    </citation>
    <scope>NUCLEOTIDE SEQUENCE [LARGE SCALE MRNA]</scope>
    <source>
        <tissue>Testis</tissue>
    </source>
</reference>
<comment type="function">
    <text evidence="1 2">Transcriptional activator, essential for early embryonic development and survival of embryonic stem cells (ESCs). Supports cell growth and survival during early development by transcriptionally activating the expression of the translation initiation factor EIF3B, to sustain global translation. Activates the transcription of FLNC.</text>
</comment>
<comment type="subcellular location">
    <subcellularLocation>
        <location evidence="2">Nucleus</location>
    </subcellularLocation>
</comment>
<comment type="domain">
    <text>The SET domain is degenerated, suggesting that it has lost methyltransferase activity.</text>
</comment>
<comment type="similarity">
    <text evidence="4">Belongs to the class V-like SAM-binding methyltransferase superfamily.</text>
</comment>
<feature type="chain" id="PRO_0000363966" description="PR domain zinc finger protein 10">
    <location>
        <begin position="1"/>
        <end position="1173"/>
    </location>
</feature>
<feature type="domain" description="SET" evidence="4">
    <location>
        <begin position="248"/>
        <end position="366"/>
    </location>
</feature>
<feature type="zinc finger region" description="C2H2-type 1" evidence="3">
    <location>
        <begin position="395"/>
        <end position="417"/>
    </location>
</feature>
<feature type="zinc finger region" description="C2H2-type 2" evidence="3">
    <location>
        <begin position="559"/>
        <end position="581"/>
    </location>
</feature>
<feature type="zinc finger region" description="C2H2-type 3" evidence="3">
    <location>
        <begin position="589"/>
        <end position="611"/>
    </location>
</feature>
<feature type="zinc finger region" description="C2H2-type 4" evidence="3">
    <location>
        <begin position="617"/>
        <end position="639"/>
    </location>
</feature>
<feature type="zinc finger region" description="C2H2-type 5" evidence="3">
    <location>
        <begin position="645"/>
        <end position="668"/>
    </location>
</feature>
<feature type="zinc finger region" description="C2H2-type 6" evidence="3">
    <location>
        <begin position="673"/>
        <end position="695"/>
    </location>
</feature>
<feature type="zinc finger region" description="C2H2-type 7" evidence="3">
    <location>
        <begin position="701"/>
        <end position="724"/>
    </location>
</feature>
<feature type="zinc finger region" description="C2H2-type 8" evidence="3">
    <location>
        <begin position="756"/>
        <end position="779"/>
    </location>
</feature>
<feature type="zinc finger region" description="C2H2-type 9" evidence="3">
    <location>
        <begin position="801"/>
        <end position="824"/>
    </location>
</feature>
<feature type="zinc finger region" description="C2H2-type 10" evidence="3">
    <location>
        <begin position="863"/>
        <end position="886"/>
    </location>
</feature>
<feature type="region of interest" description="Disordered" evidence="5">
    <location>
        <begin position="146"/>
        <end position="211"/>
    </location>
</feature>
<feature type="region of interest" description="N-terminal PR domain; essential for transcriptional activator activity" evidence="1">
    <location>
        <begin position="267"/>
        <end position="371"/>
    </location>
</feature>
<feature type="region of interest" description="Disordered" evidence="5">
    <location>
        <begin position="430"/>
        <end position="451"/>
    </location>
</feature>
<feature type="region of interest" description="C-terminal glutamine-rich region; essential for transcriptional activator activity" evidence="1">
    <location>
        <begin position="926"/>
        <end position="1153"/>
    </location>
</feature>
<feature type="region of interest" description="Disordered" evidence="5">
    <location>
        <begin position="1014"/>
        <end position="1056"/>
    </location>
</feature>
<feature type="region of interest" description="Disordered" evidence="5">
    <location>
        <begin position="1125"/>
        <end position="1173"/>
    </location>
</feature>
<feature type="compositionally biased region" description="Polar residues" evidence="5">
    <location>
        <begin position="154"/>
        <end position="167"/>
    </location>
</feature>
<feature type="compositionally biased region" description="Acidic residues" evidence="5">
    <location>
        <begin position="172"/>
        <end position="202"/>
    </location>
</feature>
<feature type="compositionally biased region" description="Basic residues" evidence="5">
    <location>
        <begin position="430"/>
        <end position="447"/>
    </location>
</feature>
<feature type="compositionally biased region" description="Low complexity" evidence="5">
    <location>
        <begin position="1150"/>
        <end position="1160"/>
    </location>
</feature>
<feature type="compositionally biased region" description="Polar residues" evidence="5">
    <location>
        <begin position="1161"/>
        <end position="1173"/>
    </location>
</feature>
<sequence>MDTKEGSPHVWPTSVEHQSNTAQVHFVPDGGSVAQIVYSDDQDRAQQQVVYTADASSFTSVDASEHTLVYIHPVDGSQTLFTDQPQVAYVQQDATTQQVTVLLPAAQSMNAANLAVLSGVSESAQTMSLDPVSQINRASLTVHDHRLPPMEGADSSTTINSLPSPNAHSDGKEDDDDDDDDDDDEEEEDDDGEDSDLDDWEAEPPRPFDPNDLWCEECNNAHPSVCPKHGALHPIPNRPVLTRARASLPLVLYIDRFLGGVYSKRRIPKRTQFGPLEGPLVKKTELKDSYIHLKVALNSPVDSEGAFQEDLWFELSEESLCNWMMFVRPAQNHLEQNLVAYQYGQHIYFTTIKNIEPKQELKVWYAASYAEFVNEKIHDITQEERKVLREQEKNWPCYECNRRFMSSEQLQQHLNSHDEKLDFISRTKPRGRTRTRRKFGPGRRPGRPPKFLRFDISSENREKIDLGTQDLLQFHNKGPHFEDCGHSTLNGLEQSELTLGTSTQGTPNQQQATQLLPPNEISTPVATTSILTAEDMRRAKRIRNAALQHLFIRKSFRPFKCLQCGKAFREKEKLDQHLRFHGRDGNYPLTCDICNKGFISTSSLENHMKFHLDQKTYSCIFCPESFDRLDLLKDHVVVHIIDGCFSCPTCKKRFTDFIQVKKHVRSFHSEKIYQCTECDKAFCRPDKLRLHMLRHSDRKDFLCSTCGKQFKRKDKLREHMQRMHNPEREAKKADRTGRAKAFKPRLASTDYESFMFKCRVCMMGFRRRGMLVNHLSKRHPEMKIDEVPELTLPIIKPNRDYYCQYCEKVYKSASKRKAHILKNHPGAELPPSIRKLRPAGPGEPDPMLSTHTQLTGTIATPPVCCPHCSKQYSSKTKMVQHIRKKHPEFSLLPISVQAPVLGTAPAVLTADGTSGETVVTTDLLTQAMTELSQTLTTEYRTPQGDFQRIQYIPVSQTTGGMQQPQHIQLQVVQVAQAQSPNQSQHSTVDMGQLHESQGYMQHAIQVQHIQVAEPTSGTQSTPQVGGQALSPSSQEAEEVNPSQLQTPASQAQANSAVQHAYLPSGWNSFRGYPSEIQMMALPQGQYVIAEAAVGTPVTPVSSGQVKAVTQTHYVISEGQGVLDMKKSSSLAEEATPNPDHMEQPASNSSQTTQYIITTTTNMNGSSEVHISKP</sequence>
<gene>
    <name type="primary">prdm10</name>
</gene>
<proteinExistence type="evidence at transcript level"/>
<dbReference type="EMBL" id="BC168013">
    <property type="protein sequence ID" value="AAI68013.1"/>
    <property type="molecule type" value="mRNA"/>
</dbReference>
<dbReference type="RefSeq" id="NP_001135541.1">
    <property type="nucleotide sequence ID" value="NM_001142069.1"/>
</dbReference>
<dbReference type="SMR" id="B4F6U4"/>
<dbReference type="FunCoup" id="B4F6U4">
    <property type="interactions" value="2685"/>
</dbReference>
<dbReference type="STRING" id="8364.ENSXETP00000046405"/>
<dbReference type="PaxDb" id="8364-ENSXETP00000062917"/>
<dbReference type="GeneID" id="100216084"/>
<dbReference type="KEGG" id="xtr:100216084"/>
<dbReference type="AGR" id="Xenbase:XB-GENE-985864"/>
<dbReference type="CTD" id="56980"/>
<dbReference type="Xenbase" id="XB-GENE-985864">
    <property type="gene designation" value="prdm10"/>
</dbReference>
<dbReference type="eggNOG" id="KOG1721">
    <property type="taxonomic scope" value="Eukaryota"/>
</dbReference>
<dbReference type="InParanoid" id="B4F6U4"/>
<dbReference type="OrthoDB" id="3535323at2759"/>
<dbReference type="Proteomes" id="UP000008143">
    <property type="component" value="Chromosome 7"/>
</dbReference>
<dbReference type="GO" id="GO:0000785">
    <property type="term" value="C:chromatin"/>
    <property type="evidence" value="ECO:0000250"/>
    <property type="project" value="UniProtKB"/>
</dbReference>
<dbReference type="GO" id="GO:0005634">
    <property type="term" value="C:nucleus"/>
    <property type="evidence" value="ECO:0000250"/>
    <property type="project" value="UniProtKB"/>
</dbReference>
<dbReference type="GO" id="GO:0003677">
    <property type="term" value="F:DNA binding"/>
    <property type="evidence" value="ECO:0007669"/>
    <property type="project" value="UniProtKB-KW"/>
</dbReference>
<dbReference type="GO" id="GO:0003700">
    <property type="term" value="F:DNA-binding transcription factor activity"/>
    <property type="evidence" value="ECO:0000250"/>
    <property type="project" value="UniProtKB"/>
</dbReference>
<dbReference type="GO" id="GO:0008168">
    <property type="term" value="F:methyltransferase activity"/>
    <property type="evidence" value="ECO:0007669"/>
    <property type="project" value="UniProtKB-KW"/>
</dbReference>
<dbReference type="GO" id="GO:0008270">
    <property type="term" value="F:zinc ion binding"/>
    <property type="evidence" value="ECO:0007669"/>
    <property type="project" value="UniProtKB-KW"/>
</dbReference>
<dbReference type="GO" id="GO:0032259">
    <property type="term" value="P:methylation"/>
    <property type="evidence" value="ECO:0007669"/>
    <property type="project" value="UniProtKB-KW"/>
</dbReference>
<dbReference type="GO" id="GO:0045893">
    <property type="term" value="P:positive regulation of DNA-templated transcription"/>
    <property type="evidence" value="ECO:0000250"/>
    <property type="project" value="UniProtKB"/>
</dbReference>
<dbReference type="CDD" id="cd19194">
    <property type="entry name" value="PR-SET_PRDM10"/>
    <property type="match status" value="1"/>
</dbReference>
<dbReference type="FunFam" id="3.30.160.60:FF:002454">
    <property type="entry name" value="PR domain containing 10"/>
    <property type="match status" value="1"/>
</dbReference>
<dbReference type="FunFam" id="2.170.270.10:FF:000007">
    <property type="entry name" value="PR domain zinc finger protein 10"/>
    <property type="match status" value="1"/>
</dbReference>
<dbReference type="FunFam" id="3.30.160.60:FF:000287">
    <property type="entry name" value="PR domain zinc finger protein 10"/>
    <property type="match status" value="1"/>
</dbReference>
<dbReference type="FunFam" id="3.30.160.60:FF:000300">
    <property type="entry name" value="PR domain zinc finger protein 10"/>
    <property type="match status" value="1"/>
</dbReference>
<dbReference type="FunFam" id="3.30.160.60:FF:000347">
    <property type="entry name" value="PR domain zinc finger protein 10"/>
    <property type="match status" value="1"/>
</dbReference>
<dbReference type="FunFam" id="3.30.160.60:FF:000411">
    <property type="entry name" value="PR domain zinc finger protein 10"/>
    <property type="match status" value="1"/>
</dbReference>
<dbReference type="FunFam" id="3.30.160.60:FF:000413">
    <property type="entry name" value="PR domain zinc finger protein 10"/>
    <property type="match status" value="1"/>
</dbReference>
<dbReference type="Gene3D" id="3.30.160.60">
    <property type="entry name" value="Classic Zinc Finger"/>
    <property type="match status" value="6"/>
</dbReference>
<dbReference type="Gene3D" id="2.170.270.10">
    <property type="entry name" value="SET domain"/>
    <property type="match status" value="1"/>
</dbReference>
<dbReference type="InterPro" id="IPR044403">
    <property type="entry name" value="PRDM10_PR/SET"/>
</dbReference>
<dbReference type="InterPro" id="IPR001214">
    <property type="entry name" value="SET_dom"/>
</dbReference>
<dbReference type="InterPro" id="IPR046341">
    <property type="entry name" value="SET_dom_sf"/>
</dbReference>
<dbReference type="InterPro" id="IPR050331">
    <property type="entry name" value="Zinc_finger"/>
</dbReference>
<dbReference type="InterPro" id="IPR036236">
    <property type="entry name" value="Znf_C2H2_sf"/>
</dbReference>
<dbReference type="InterPro" id="IPR013087">
    <property type="entry name" value="Znf_C2H2_type"/>
</dbReference>
<dbReference type="PANTHER" id="PTHR16515:SF49">
    <property type="entry name" value="GASTRULA ZINC FINGER PROTEIN XLCGF49.1-LIKE-RELATED"/>
    <property type="match status" value="1"/>
</dbReference>
<dbReference type="PANTHER" id="PTHR16515">
    <property type="entry name" value="PR DOMAIN ZINC FINGER PROTEIN"/>
    <property type="match status" value="1"/>
</dbReference>
<dbReference type="Pfam" id="PF21549">
    <property type="entry name" value="PRDM2_PR"/>
    <property type="match status" value="1"/>
</dbReference>
<dbReference type="Pfam" id="PF00096">
    <property type="entry name" value="zf-C2H2"/>
    <property type="match status" value="5"/>
</dbReference>
<dbReference type="Pfam" id="PF12874">
    <property type="entry name" value="zf-met"/>
    <property type="match status" value="1"/>
</dbReference>
<dbReference type="SMART" id="SM00355">
    <property type="entry name" value="ZnF_C2H2"/>
    <property type="match status" value="10"/>
</dbReference>
<dbReference type="SUPFAM" id="SSF57667">
    <property type="entry name" value="beta-beta-alpha zinc fingers"/>
    <property type="match status" value="3"/>
</dbReference>
<dbReference type="PROSITE" id="PS50280">
    <property type="entry name" value="SET"/>
    <property type="match status" value="1"/>
</dbReference>
<dbReference type="PROSITE" id="PS00028">
    <property type="entry name" value="ZINC_FINGER_C2H2_1"/>
    <property type="match status" value="10"/>
</dbReference>
<dbReference type="PROSITE" id="PS50157">
    <property type="entry name" value="ZINC_FINGER_C2H2_2"/>
    <property type="match status" value="10"/>
</dbReference>